<sequence length="115" mass="13243">MANHFRVDRVGMEIKREVNEILQKKVRDPRVQGVTITDVQMLGDLSMAKVYYTIMSDLASDNQKAQLGLEKATGTIKRELGHNLKMYKIPDLTFVKDQSIEYGNKIDQMLRDLDK</sequence>
<comment type="function">
    <text evidence="1">One of several proteins that assist in the late maturation steps of the functional core of the 30S ribosomal subunit. Associates with free 30S ribosomal subunits (but not with 30S subunits that are part of 70S ribosomes or polysomes). Required for efficient processing of 16S rRNA. May interact with the 5'-terminal helix region of 16S rRNA.</text>
</comment>
<comment type="subunit">
    <text evidence="1">Monomer. Binds 30S ribosomal subunits, but not 50S ribosomal subunits or 70S ribosomes.</text>
</comment>
<comment type="subcellular location">
    <subcellularLocation>
        <location evidence="1">Cytoplasm</location>
    </subcellularLocation>
</comment>
<comment type="similarity">
    <text evidence="1">Belongs to the RbfA family.</text>
</comment>
<proteinExistence type="inferred from homology"/>
<feature type="chain" id="PRO_1000073784" description="Ribosome-binding factor A">
    <location>
        <begin position="1"/>
        <end position="115"/>
    </location>
</feature>
<keyword id="KW-0963">Cytoplasm</keyword>
<keyword id="KW-1185">Reference proteome</keyword>
<keyword id="KW-0690">Ribosome biogenesis</keyword>
<accession>A8AVQ3</accession>
<dbReference type="EMBL" id="CP000725">
    <property type="protein sequence ID" value="ABV09662.1"/>
    <property type="molecule type" value="Genomic_DNA"/>
</dbReference>
<dbReference type="RefSeq" id="WP_008808551.1">
    <property type="nucleotide sequence ID" value="NC_009785.1"/>
</dbReference>
<dbReference type="SMR" id="A8AVQ3"/>
<dbReference type="STRING" id="467705.SGO_0547"/>
<dbReference type="GeneID" id="93788298"/>
<dbReference type="KEGG" id="sgo:SGO_0547"/>
<dbReference type="eggNOG" id="COG0858">
    <property type="taxonomic scope" value="Bacteria"/>
</dbReference>
<dbReference type="HOGENOM" id="CLU_089475_3_0_9"/>
<dbReference type="Proteomes" id="UP000001131">
    <property type="component" value="Chromosome"/>
</dbReference>
<dbReference type="GO" id="GO:0005829">
    <property type="term" value="C:cytosol"/>
    <property type="evidence" value="ECO:0007669"/>
    <property type="project" value="TreeGrafter"/>
</dbReference>
<dbReference type="GO" id="GO:0043024">
    <property type="term" value="F:ribosomal small subunit binding"/>
    <property type="evidence" value="ECO:0007669"/>
    <property type="project" value="TreeGrafter"/>
</dbReference>
<dbReference type="GO" id="GO:0030490">
    <property type="term" value="P:maturation of SSU-rRNA"/>
    <property type="evidence" value="ECO:0007669"/>
    <property type="project" value="UniProtKB-UniRule"/>
</dbReference>
<dbReference type="FunFam" id="3.30.300.20:FF:000012">
    <property type="entry name" value="Ribosome-binding factor A"/>
    <property type="match status" value="1"/>
</dbReference>
<dbReference type="Gene3D" id="3.30.300.20">
    <property type="match status" value="1"/>
</dbReference>
<dbReference type="HAMAP" id="MF_00003">
    <property type="entry name" value="RbfA"/>
    <property type="match status" value="1"/>
</dbReference>
<dbReference type="InterPro" id="IPR015946">
    <property type="entry name" value="KH_dom-like_a/b"/>
</dbReference>
<dbReference type="InterPro" id="IPR000238">
    <property type="entry name" value="RbfA"/>
</dbReference>
<dbReference type="InterPro" id="IPR023799">
    <property type="entry name" value="RbfA_dom_sf"/>
</dbReference>
<dbReference type="InterPro" id="IPR020053">
    <property type="entry name" value="Ribosome-bd_factorA_CS"/>
</dbReference>
<dbReference type="NCBIfam" id="TIGR00082">
    <property type="entry name" value="rbfA"/>
    <property type="match status" value="1"/>
</dbReference>
<dbReference type="PANTHER" id="PTHR33515">
    <property type="entry name" value="RIBOSOME-BINDING FACTOR A, CHLOROPLASTIC-RELATED"/>
    <property type="match status" value="1"/>
</dbReference>
<dbReference type="PANTHER" id="PTHR33515:SF1">
    <property type="entry name" value="RIBOSOME-BINDING FACTOR A, CHLOROPLASTIC-RELATED"/>
    <property type="match status" value="1"/>
</dbReference>
<dbReference type="Pfam" id="PF02033">
    <property type="entry name" value="RBFA"/>
    <property type="match status" value="1"/>
</dbReference>
<dbReference type="SUPFAM" id="SSF89919">
    <property type="entry name" value="Ribosome-binding factor A, RbfA"/>
    <property type="match status" value="1"/>
</dbReference>
<dbReference type="PROSITE" id="PS01319">
    <property type="entry name" value="RBFA"/>
    <property type="match status" value="1"/>
</dbReference>
<organism>
    <name type="scientific">Streptococcus gordonii (strain Challis / ATCC 35105 / BCRC 15272 / CH1 / DL1 / V288)</name>
    <dbReference type="NCBI Taxonomy" id="467705"/>
    <lineage>
        <taxon>Bacteria</taxon>
        <taxon>Bacillati</taxon>
        <taxon>Bacillota</taxon>
        <taxon>Bacilli</taxon>
        <taxon>Lactobacillales</taxon>
        <taxon>Streptococcaceae</taxon>
        <taxon>Streptococcus</taxon>
    </lineage>
</organism>
<evidence type="ECO:0000255" key="1">
    <source>
        <dbReference type="HAMAP-Rule" id="MF_00003"/>
    </source>
</evidence>
<reference key="1">
    <citation type="journal article" date="2007" name="J. Bacteriol.">
        <title>Genome-wide transcriptional changes in Streptococcus gordonii in response to competence signaling peptide.</title>
        <authorList>
            <person name="Vickerman M.M."/>
            <person name="Iobst S."/>
            <person name="Jesionowski A.M."/>
            <person name="Gill S.R."/>
        </authorList>
    </citation>
    <scope>NUCLEOTIDE SEQUENCE [LARGE SCALE GENOMIC DNA]</scope>
    <source>
        <strain>Challis / ATCC 35105 / BCRC 15272 / CH1 / DL1 / V288</strain>
    </source>
</reference>
<gene>
    <name evidence="1" type="primary">rbfA</name>
    <name type="ordered locus">SGO_0547</name>
</gene>
<protein>
    <recommendedName>
        <fullName evidence="1">Ribosome-binding factor A</fullName>
    </recommendedName>
</protein>
<name>RBFA_STRGC</name>